<evidence type="ECO:0000250" key="1">
    <source>
        <dbReference type="UniProtKB" id="P62701"/>
    </source>
</evidence>
<evidence type="ECO:0000250" key="2">
    <source>
        <dbReference type="UniProtKB" id="P62702"/>
    </source>
</evidence>
<evidence type="ECO:0000305" key="3"/>
<protein>
    <recommendedName>
        <fullName evidence="3">Small ribosomal subunit protein eS4, X isoform</fullName>
    </recommendedName>
    <alternativeName>
        <fullName>40S ribosomal protein S4, X isoform</fullName>
    </alternativeName>
</protein>
<gene>
    <name type="primary">RPS4X</name>
</gene>
<keyword id="KW-0007">Acetylation</keyword>
<keyword id="KW-0963">Cytoplasm</keyword>
<keyword id="KW-1017">Isopeptide bond</keyword>
<keyword id="KW-0539">Nucleus</keyword>
<keyword id="KW-1185">Reference proteome</keyword>
<keyword id="KW-0687">Ribonucleoprotein</keyword>
<keyword id="KW-0689">Ribosomal protein</keyword>
<keyword id="KW-0694">RNA-binding</keyword>
<keyword id="KW-0699">rRNA-binding</keyword>
<keyword id="KW-0832">Ubl conjugation</keyword>
<feature type="initiator methionine" description="Removed" evidence="1">
    <location>
        <position position="1"/>
    </location>
</feature>
<feature type="chain" id="PRO_0000130808" description="Small ribosomal subunit protein eS4, X isoform">
    <location>
        <begin position="2"/>
        <end position="263"/>
    </location>
</feature>
<feature type="domain" description="S4 RNA-binding">
    <location>
        <begin position="42"/>
        <end position="104"/>
    </location>
</feature>
<feature type="modified residue" description="N6-acetyllysine" evidence="2">
    <location>
        <position position="233"/>
    </location>
</feature>
<feature type="cross-link" description="Glycyl lysine isopeptide (Lys-Gly) (interchain with G-Cter in SUMO2)" evidence="1">
    <location>
        <position position="230"/>
    </location>
</feature>
<name>RS4X_MONDO</name>
<proteinExistence type="evidence at transcript level"/>
<dbReference type="EMBL" id="AF051136">
    <property type="protein sequence ID" value="AAC32105.1"/>
    <property type="molecule type" value="mRNA"/>
</dbReference>
<dbReference type="RefSeq" id="NP_001028159.1">
    <property type="nucleotide sequence ID" value="NM_001032987.1"/>
</dbReference>
<dbReference type="SMR" id="O62738"/>
<dbReference type="STRING" id="13616.ENSMODP00000013861"/>
<dbReference type="Ensembl" id="ENSMODT00000053049.1">
    <property type="protein sequence ID" value="ENSMODP00000058525.1"/>
    <property type="gene ID" value="ENSMODG00000011070.3"/>
</dbReference>
<dbReference type="GeneID" id="554195"/>
<dbReference type="KEGG" id="mdo:554195"/>
<dbReference type="CTD" id="6191"/>
<dbReference type="eggNOG" id="KOG0378">
    <property type="taxonomic scope" value="Eukaryota"/>
</dbReference>
<dbReference type="GeneTree" id="ENSGT00390000005569"/>
<dbReference type="HOGENOM" id="CLU_060400_1_0_1"/>
<dbReference type="InParanoid" id="O62738"/>
<dbReference type="OrthoDB" id="9816514at2759"/>
<dbReference type="TreeFam" id="TF300612"/>
<dbReference type="Proteomes" id="UP000002280">
    <property type="component" value="Chromosome X"/>
</dbReference>
<dbReference type="Bgee" id="ENSMODG00000011070">
    <property type="expression patterns" value="Expressed in skeleton of lower jaw and 19 other cell types or tissues"/>
</dbReference>
<dbReference type="GO" id="GO:0022627">
    <property type="term" value="C:cytosolic small ribosomal subunit"/>
    <property type="evidence" value="ECO:0000318"/>
    <property type="project" value="GO_Central"/>
</dbReference>
<dbReference type="GO" id="GO:0005730">
    <property type="term" value="C:nucleolus"/>
    <property type="evidence" value="ECO:0007669"/>
    <property type="project" value="UniProtKB-SubCell"/>
</dbReference>
<dbReference type="GO" id="GO:1990904">
    <property type="term" value="C:ribonucleoprotein complex"/>
    <property type="evidence" value="ECO:0000250"/>
    <property type="project" value="UniProtKB"/>
</dbReference>
<dbReference type="GO" id="GO:0005840">
    <property type="term" value="C:ribosome"/>
    <property type="evidence" value="ECO:0000250"/>
    <property type="project" value="UniProtKB"/>
</dbReference>
<dbReference type="GO" id="GO:0032040">
    <property type="term" value="C:small-subunit processome"/>
    <property type="evidence" value="ECO:0000250"/>
    <property type="project" value="UniProtKB"/>
</dbReference>
<dbReference type="GO" id="GO:0003723">
    <property type="term" value="F:RNA binding"/>
    <property type="evidence" value="ECO:0000318"/>
    <property type="project" value="GO_Central"/>
</dbReference>
<dbReference type="GO" id="GO:0019843">
    <property type="term" value="F:rRNA binding"/>
    <property type="evidence" value="ECO:0007669"/>
    <property type="project" value="UniProtKB-KW"/>
</dbReference>
<dbReference type="GO" id="GO:0003735">
    <property type="term" value="F:structural constituent of ribosome"/>
    <property type="evidence" value="ECO:0000318"/>
    <property type="project" value="GO_Central"/>
</dbReference>
<dbReference type="GO" id="GO:0042274">
    <property type="term" value="P:ribosomal small subunit biogenesis"/>
    <property type="evidence" value="ECO:0000250"/>
    <property type="project" value="UniProtKB"/>
</dbReference>
<dbReference type="GO" id="GO:0006412">
    <property type="term" value="P:translation"/>
    <property type="evidence" value="ECO:0000318"/>
    <property type="project" value="GO_Central"/>
</dbReference>
<dbReference type="CDD" id="cd06087">
    <property type="entry name" value="KOW_RPS4"/>
    <property type="match status" value="1"/>
</dbReference>
<dbReference type="CDD" id="cd00165">
    <property type="entry name" value="S4"/>
    <property type="match status" value="1"/>
</dbReference>
<dbReference type="FunFam" id="2.30.30.30:FF:000005">
    <property type="entry name" value="40S ribosomal protein S4"/>
    <property type="match status" value="1"/>
</dbReference>
<dbReference type="FunFam" id="2.40.50.740:FF:000001">
    <property type="entry name" value="40S ribosomal protein S4"/>
    <property type="match status" value="1"/>
</dbReference>
<dbReference type="FunFam" id="3.10.290.10:FF:000051">
    <property type="entry name" value="40S ribosomal protein S4, X isoform"/>
    <property type="match status" value="1"/>
</dbReference>
<dbReference type="Gene3D" id="2.30.30.30">
    <property type="match status" value="1"/>
</dbReference>
<dbReference type="Gene3D" id="2.40.50.740">
    <property type="match status" value="1"/>
</dbReference>
<dbReference type="Gene3D" id="3.10.290.10">
    <property type="entry name" value="RNA-binding S4 domain"/>
    <property type="match status" value="1"/>
</dbReference>
<dbReference type="HAMAP" id="MF_00485">
    <property type="entry name" value="Ribosomal_eS4"/>
    <property type="match status" value="1"/>
</dbReference>
<dbReference type="InterPro" id="IPR005824">
    <property type="entry name" value="KOW"/>
</dbReference>
<dbReference type="InterPro" id="IPR014722">
    <property type="entry name" value="Rib_uL2_dom2"/>
</dbReference>
<dbReference type="InterPro" id="IPR000876">
    <property type="entry name" value="Ribosomal_eS4"/>
</dbReference>
<dbReference type="InterPro" id="IPR032277">
    <property type="entry name" value="Ribosomal_eS4_C"/>
</dbReference>
<dbReference type="InterPro" id="IPR013845">
    <property type="entry name" value="Ribosomal_eS4_central_region"/>
</dbReference>
<dbReference type="InterPro" id="IPR038237">
    <property type="entry name" value="Ribosomal_eS4_central_sf"/>
</dbReference>
<dbReference type="InterPro" id="IPR041982">
    <property type="entry name" value="Ribosomal_eS4_KOW"/>
</dbReference>
<dbReference type="InterPro" id="IPR013843">
    <property type="entry name" value="Ribosomal_eS4_N"/>
</dbReference>
<dbReference type="InterPro" id="IPR018199">
    <property type="entry name" value="Ribosomal_eS4_N_CS"/>
</dbReference>
<dbReference type="InterPro" id="IPR002942">
    <property type="entry name" value="S4_RNA-bd"/>
</dbReference>
<dbReference type="InterPro" id="IPR036986">
    <property type="entry name" value="S4_RNA-bd_sf"/>
</dbReference>
<dbReference type="PANTHER" id="PTHR11581">
    <property type="entry name" value="30S/40S RIBOSOMAL PROTEIN S4"/>
    <property type="match status" value="1"/>
</dbReference>
<dbReference type="PANTHER" id="PTHR11581:SF0">
    <property type="entry name" value="SMALL RIBOSOMAL SUBUNIT PROTEIN ES4"/>
    <property type="match status" value="1"/>
</dbReference>
<dbReference type="Pfam" id="PF16121">
    <property type="entry name" value="40S_S4_C"/>
    <property type="match status" value="1"/>
</dbReference>
<dbReference type="Pfam" id="PF00467">
    <property type="entry name" value="KOW"/>
    <property type="match status" value="1"/>
</dbReference>
<dbReference type="Pfam" id="PF00900">
    <property type="entry name" value="Ribosomal_S4e"/>
    <property type="match status" value="1"/>
</dbReference>
<dbReference type="Pfam" id="PF08071">
    <property type="entry name" value="RS4NT"/>
    <property type="match status" value="1"/>
</dbReference>
<dbReference type="Pfam" id="PF01479">
    <property type="entry name" value="S4"/>
    <property type="match status" value="1"/>
</dbReference>
<dbReference type="PIRSF" id="PIRSF002116">
    <property type="entry name" value="Ribosomal_S4"/>
    <property type="match status" value="1"/>
</dbReference>
<dbReference type="SMART" id="SM00363">
    <property type="entry name" value="S4"/>
    <property type="match status" value="1"/>
</dbReference>
<dbReference type="PROSITE" id="PS00528">
    <property type="entry name" value="RIBOSOMAL_S4E"/>
    <property type="match status" value="1"/>
</dbReference>
<dbReference type="PROSITE" id="PS50889">
    <property type="entry name" value="S4"/>
    <property type="match status" value="1"/>
</dbReference>
<sequence>MARGPKKHLKRVAAPKHWMLDKLTGVFAPRPSTGPHKLRECLPLIIFLRNRLKYALTGDEVKKICMQRFIKIDGKVRTDTTYPVGFMDVISIEKTGEHFRLVYDTKGRFAVHRITAEEAKYKLCKVRKTFVGTKAIPHLVTHDARTIRYPDPLIKMNDTIQIDLETGKITDFIKFDTGNMCMVTGGANLGRIGVITNREKHPGSFDVVHVKDANGNSFATRLSNIFVIGKGNKPWISLPRGKGIRLTIAEERDKRLAAKQNNG</sequence>
<organism>
    <name type="scientific">Monodelphis domestica</name>
    <name type="common">Gray short-tailed opossum</name>
    <dbReference type="NCBI Taxonomy" id="13616"/>
    <lineage>
        <taxon>Eukaryota</taxon>
        <taxon>Metazoa</taxon>
        <taxon>Chordata</taxon>
        <taxon>Craniata</taxon>
        <taxon>Vertebrata</taxon>
        <taxon>Euteleostomi</taxon>
        <taxon>Mammalia</taxon>
        <taxon>Metatheria</taxon>
        <taxon>Didelphimorphia</taxon>
        <taxon>Didelphidae</taxon>
        <taxon>Monodelphis</taxon>
    </lineage>
</organism>
<reference key="1">
    <citation type="journal article" date="1998" name="Nature">
        <title>A proposed path by which genes common to mammalian X and Y chromosomes evolve to become X inactivated.</title>
        <authorList>
            <person name="Jegalian K.G."/>
            <person name="Page D.C."/>
        </authorList>
    </citation>
    <scope>NUCLEOTIDE SEQUENCE [MRNA]</scope>
    <source>
        <tissue>Spleen</tissue>
    </source>
</reference>
<accession>O62738</accession>
<comment type="function">
    <text evidence="1">Component of the small ribosomal subunit. The ribosome is a large ribonucleoprotein complex responsible for the synthesis of proteins in the cell. Part of the small subunit (SSU) processome, first precursor of the small eukaryotic ribosomal subunit. During the assembly of the SSU processome in the nucleolus, many ribosome biogenesis factors, an RNA chaperone and ribosomal proteins associate with the nascent pre-rRNA and work in concert to generate RNA folding, modifications, rearrangements and cleavage as well as targeted degradation of pre-ribosomal RNA by the RNA exosome.</text>
</comment>
<comment type="subunit">
    <text evidence="1">Component of the small ribosomal subunit. Part of the small subunit (SSU) processome, composed of more than 70 proteins and the RNA chaperone small nucleolar RNA (snoRNA) U3. Identified in a IGF2BP1-dependent mRNP granule complex containing untranslated mRNAs.</text>
</comment>
<comment type="subcellular location">
    <subcellularLocation>
        <location evidence="1">Cytoplasm</location>
    </subcellularLocation>
    <subcellularLocation>
        <location evidence="1">Nucleus</location>
        <location evidence="1">Nucleolus</location>
    </subcellularLocation>
    <text evidence="1">Localized in cytoplasmic mRNP granules containing untranslated mRNAs.</text>
</comment>
<comment type="similarity">
    <text evidence="3">Belongs to the eukaryotic ribosomal protein eS4 family.</text>
</comment>